<reference key="1">
    <citation type="submission" date="1997-01" db="EMBL/GenBank/DDBJ databases">
        <title>Sequence of minutes 4-25 of Escherichia coli.</title>
        <authorList>
            <person name="Chung E."/>
            <person name="Allen E."/>
            <person name="Araujo R."/>
            <person name="Aparicio A.M."/>
            <person name="Davis K."/>
            <person name="Duncan M."/>
            <person name="Federspiel N."/>
            <person name="Hyman R."/>
            <person name="Kalman S."/>
            <person name="Komp C."/>
            <person name="Kurdi O."/>
            <person name="Lew H."/>
            <person name="Lin D."/>
            <person name="Namath A."/>
            <person name="Oefner P."/>
            <person name="Roberts D."/>
            <person name="Schramm S."/>
            <person name="Davis R.W."/>
        </authorList>
    </citation>
    <scope>NUCLEOTIDE SEQUENCE [LARGE SCALE GENOMIC DNA]</scope>
    <source>
        <strain>K12 / MG1655 / ATCC 47076</strain>
    </source>
</reference>
<reference key="2">
    <citation type="journal article" date="1997" name="Science">
        <title>The complete genome sequence of Escherichia coli K-12.</title>
        <authorList>
            <person name="Blattner F.R."/>
            <person name="Plunkett G. III"/>
            <person name="Bloch C.A."/>
            <person name="Perna N.T."/>
            <person name="Burland V."/>
            <person name="Riley M."/>
            <person name="Collado-Vides J."/>
            <person name="Glasner J.D."/>
            <person name="Rode C.K."/>
            <person name="Mayhew G.F."/>
            <person name="Gregor J."/>
            <person name="Davis N.W."/>
            <person name="Kirkpatrick H.A."/>
            <person name="Goeden M.A."/>
            <person name="Rose D.J."/>
            <person name="Mau B."/>
            <person name="Shao Y."/>
        </authorList>
    </citation>
    <scope>NUCLEOTIDE SEQUENCE [LARGE SCALE GENOMIC DNA]</scope>
    <source>
        <strain>K12 / MG1655 / ATCC 47076</strain>
    </source>
</reference>
<reference key="3">
    <citation type="journal article" date="2006" name="Mol. Syst. Biol.">
        <title>Highly accurate genome sequences of Escherichia coli K-12 strains MG1655 and W3110.</title>
        <authorList>
            <person name="Hayashi K."/>
            <person name="Morooka N."/>
            <person name="Yamamoto Y."/>
            <person name="Fujita K."/>
            <person name="Isono K."/>
            <person name="Choi S."/>
            <person name="Ohtsubo E."/>
            <person name="Baba T."/>
            <person name="Wanner B.L."/>
            <person name="Mori H."/>
            <person name="Horiuchi T."/>
        </authorList>
    </citation>
    <scope>NUCLEOTIDE SEQUENCE [LARGE SCALE GENOMIC DNA]</scope>
    <source>
        <strain>K12 / W3110 / ATCC 27325 / DSM 5911</strain>
    </source>
</reference>
<reference key="4">
    <citation type="journal article" date="2016" name="Mutat. Res.">
        <title>Screen for genes involved in radiation survival of Escherichia coli and construction of a reference database.</title>
        <authorList>
            <person name="Sargentini N.J."/>
            <person name="Gularte N.P."/>
            <person name="Hudman D.A."/>
        </authorList>
    </citation>
    <scope>DISRUPTION PHENOTYPE</scope>
    <source>
        <strain>K12 / BW25113</strain>
    </source>
</reference>
<organism>
    <name type="scientific">Escherichia coli (strain K12)</name>
    <dbReference type="NCBI Taxonomy" id="83333"/>
    <lineage>
        <taxon>Bacteria</taxon>
        <taxon>Pseudomonadati</taxon>
        <taxon>Pseudomonadota</taxon>
        <taxon>Gammaproteobacteria</taxon>
        <taxon>Enterobacterales</taxon>
        <taxon>Enterobacteriaceae</taxon>
        <taxon>Escherichia</taxon>
    </lineage>
</organism>
<gene>
    <name type="primary">yagJ</name>
    <name type="ordered locus">b0276</name>
    <name type="ordered locus">JW0270</name>
</gene>
<sequence length="243" mass="27859">MEARVTVAGMGLVMEVQDYFDGEADRLAKAWLAEYTPQIKSLKDERKEAYRQIVEMSTEPQDVDLVRPANKFEMTRVREGEKEADLPVWKHHLLCDESGNYPALLNHWETKVFEIETKREGFAFWYRNPQYTGQSSLGIAYVEAEQYKIVRPDFLFFAEQDGKMVVDLVDPHSLHLADALPKLEGLALYAEHHSDAYRRIESVAEVKGKLRVLDLKRQDVQDAVATAENAETLFSSGLADDYQ</sequence>
<proteinExistence type="predicted"/>
<accession>P77169</accession>
<accession>A0A385XMS3</accession>
<accession>Q2MCE6</accession>
<name>YAGJ_ECOLI</name>
<feature type="chain" id="PRO_0000168556" description="Protein YagJ">
    <location>
        <begin position="1"/>
        <end position="243"/>
    </location>
</feature>
<evidence type="ECO:0000269" key="1">
    <source>
    </source>
</evidence>
<evidence type="ECO:0000305" key="2"/>
<comment type="disruption phenotype">
    <text evidence="1">3-fold increased sensitivity to X-radiation.</text>
</comment>
<comment type="miscellaneous">
    <text evidence="2">Encoded by the CP4-6 prophage. May be missing up to 150 N-terminal residues compared to orthologs.</text>
</comment>
<keyword id="KW-1185">Reference proteome</keyword>
<dbReference type="EMBL" id="U70214">
    <property type="protein sequence ID" value="AAB08696.1"/>
    <property type="molecule type" value="Genomic_DNA"/>
</dbReference>
<dbReference type="EMBL" id="U00096">
    <property type="protein sequence ID" value="AYC08172.1"/>
    <property type="molecule type" value="Genomic_DNA"/>
</dbReference>
<dbReference type="EMBL" id="AP009048">
    <property type="protein sequence ID" value="BAE76060.1"/>
    <property type="molecule type" value="Genomic_DNA"/>
</dbReference>
<dbReference type="PIR" id="D64753">
    <property type="entry name" value="D64753"/>
</dbReference>
<dbReference type="RefSeq" id="WP_000388269.1">
    <property type="nucleotide sequence ID" value="NZ_LN832404.1"/>
</dbReference>
<dbReference type="SMR" id="P77169"/>
<dbReference type="BioGRID" id="4259778">
    <property type="interactions" value="32"/>
</dbReference>
<dbReference type="DIP" id="DIP-11237N"/>
<dbReference type="FunCoup" id="P77169">
    <property type="interactions" value="49"/>
</dbReference>
<dbReference type="IntAct" id="P77169">
    <property type="interactions" value="7"/>
</dbReference>
<dbReference type="EnsemblBacteria" id="AYC08172">
    <property type="protein sequence ID" value="AYC08172"/>
    <property type="gene ID" value="b0276"/>
</dbReference>
<dbReference type="KEGG" id="ecj:JW0270"/>
<dbReference type="KEGG" id="ecoc:C3026_01335"/>
<dbReference type="PATRIC" id="fig|83333.103.peg.1031"/>
<dbReference type="EchoBASE" id="EB3319"/>
<dbReference type="eggNOG" id="COG1061">
    <property type="taxonomic scope" value="Bacteria"/>
</dbReference>
<dbReference type="HOGENOM" id="CLU_058600_0_0_6"/>
<dbReference type="InParanoid" id="P77169"/>
<dbReference type="OrthoDB" id="9804145at2"/>
<dbReference type="BioCyc" id="EcoCyc:G6147-MONOMER"/>
<dbReference type="PRO" id="PR:P77169"/>
<dbReference type="Proteomes" id="UP000000625">
    <property type="component" value="Chromosome"/>
</dbReference>
<dbReference type="GO" id="GO:0010165">
    <property type="term" value="P:response to X-ray"/>
    <property type="evidence" value="ECO:0000315"/>
    <property type="project" value="EcoCyc"/>
</dbReference>
<protein>
    <recommendedName>
        <fullName>Protein YagJ</fullName>
    </recommendedName>
</protein>